<name>MSRQ_ECOK1</name>
<evidence type="ECO:0000255" key="1">
    <source>
        <dbReference type="HAMAP-Rule" id="MF_01207"/>
    </source>
</evidence>
<protein>
    <recommendedName>
        <fullName evidence="1">Protein-methionine-sulfoxide reductase heme-binding subunit MsrQ</fullName>
    </recommendedName>
    <alternativeName>
        <fullName evidence="1">Flavocytochrome MsrQ</fullName>
    </alternativeName>
</protein>
<sequence>MRLTAKQVTWLKVCLHLAGLLPFLWLAWAINHGGLGADPVKDIQHFTGRTALKFLLATLLITPLARYAKQPLLIRTRRLLGLWCFAWATLHLTSYALLELGVNNLALLGKELITRPYLTLGIISWVILLALAFTSTQAMQRKLGKHWQQLHNFVYLVAILAPIHYLWSVKIISPQPLIYAGLAVLLLALRYKKLLSLFNQLRKQVHNKLSL</sequence>
<keyword id="KW-0997">Cell inner membrane</keyword>
<keyword id="KW-1003">Cell membrane</keyword>
<keyword id="KW-0249">Electron transport</keyword>
<keyword id="KW-0285">Flavoprotein</keyword>
<keyword id="KW-0288">FMN</keyword>
<keyword id="KW-0349">Heme</keyword>
<keyword id="KW-0408">Iron</keyword>
<keyword id="KW-0472">Membrane</keyword>
<keyword id="KW-0479">Metal-binding</keyword>
<keyword id="KW-1185">Reference proteome</keyword>
<keyword id="KW-0812">Transmembrane</keyword>
<keyword id="KW-1133">Transmembrane helix</keyword>
<keyword id="KW-0813">Transport</keyword>
<reference key="1">
    <citation type="journal article" date="2007" name="J. Bacteriol.">
        <title>The genome sequence of avian pathogenic Escherichia coli strain O1:K1:H7 shares strong similarities with human extraintestinal pathogenic E. coli genomes.</title>
        <authorList>
            <person name="Johnson T.J."/>
            <person name="Kariyawasam S."/>
            <person name="Wannemuehler Y."/>
            <person name="Mangiamele P."/>
            <person name="Johnson S.J."/>
            <person name="Doetkott C."/>
            <person name="Skyberg J.A."/>
            <person name="Lynne A.M."/>
            <person name="Johnson J.R."/>
            <person name="Nolan L.K."/>
        </authorList>
    </citation>
    <scope>NUCLEOTIDE SEQUENCE [LARGE SCALE GENOMIC DNA]</scope>
</reference>
<proteinExistence type="inferred from homology"/>
<organism>
    <name type="scientific">Escherichia coli O1:K1 / APEC</name>
    <dbReference type="NCBI Taxonomy" id="405955"/>
    <lineage>
        <taxon>Bacteria</taxon>
        <taxon>Pseudomonadati</taxon>
        <taxon>Pseudomonadota</taxon>
        <taxon>Gammaproteobacteria</taxon>
        <taxon>Enterobacterales</taxon>
        <taxon>Enterobacteriaceae</taxon>
        <taxon>Escherichia</taxon>
    </lineage>
</organism>
<gene>
    <name evidence="1" type="primary">msrQ</name>
    <name type="ordered locus">Ecok1_18130</name>
    <name type="ORF">APECO1_1007</name>
</gene>
<accession>A1ACB7</accession>
<comment type="function">
    <text evidence="1">Part of the MsrPQ system that repairs oxidized periplasmic proteins containing methionine sulfoxide residues (Met-O), using respiratory chain electrons. Thus protects these proteins from oxidative-stress damage caused by reactive species of oxygen and chlorine generated by the host defense mechanisms. MsrPQ is essential for the maintenance of envelope integrity under bleach stress, rescuing a wide series of structurally unrelated periplasmic proteins from methionine oxidation, including the primary periplasmic chaperone SurA and the lipoprotein Pal. MsrQ provides electrons for reduction to the reductase catalytic subunit MsrP, using the quinone pool of the respiratory chain.</text>
</comment>
<comment type="cofactor">
    <cofactor evidence="1">
        <name>FMN</name>
        <dbReference type="ChEBI" id="CHEBI:58210"/>
    </cofactor>
    <text evidence="1">Binds 1 FMN per subunit.</text>
</comment>
<comment type="cofactor">
    <cofactor evidence="1">
        <name>heme b</name>
        <dbReference type="ChEBI" id="CHEBI:60344"/>
    </cofactor>
    <text evidence="1">Binds 1 heme b (iron(II)-protoporphyrin IX) group per subunit.</text>
</comment>
<comment type="subunit">
    <text evidence="1">Heterodimer of a catalytic subunit (MsrP) and a heme-binding subunit (MsrQ).</text>
</comment>
<comment type="subcellular location">
    <subcellularLocation>
        <location evidence="1">Cell inner membrane</location>
        <topology evidence="1">Multi-pass membrane protein</topology>
    </subcellularLocation>
</comment>
<comment type="similarity">
    <text evidence="1">Belongs to the MsrQ family.</text>
</comment>
<dbReference type="EMBL" id="CP000468">
    <property type="protein sequence ID" value="ABJ01307.1"/>
    <property type="molecule type" value="Genomic_DNA"/>
</dbReference>
<dbReference type="RefSeq" id="WP_001240073.1">
    <property type="nucleotide sequence ID" value="NZ_CADILS010000098.1"/>
</dbReference>
<dbReference type="SMR" id="A1ACB7"/>
<dbReference type="KEGG" id="ecv:APECO1_1007"/>
<dbReference type="HOGENOM" id="CLU_080662_0_1_6"/>
<dbReference type="Proteomes" id="UP000008216">
    <property type="component" value="Chromosome"/>
</dbReference>
<dbReference type="GO" id="GO:0005886">
    <property type="term" value="C:plasma membrane"/>
    <property type="evidence" value="ECO:0007669"/>
    <property type="project" value="UniProtKB-SubCell"/>
</dbReference>
<dbReference type="GO" id="GO:0009055">
    <property type="term" value="F:electron transfer activity"/>
    <property type="evidence" value="ECO:0007669"/>
    <property type="project" value="UniProtKB-UniRule"/>
</dbReference>
<dbReference type="GO" id="GO:0010181">
    <property type="term" value="F:FMN binding"/>
    <property type="evidence" value="ECO:0007669"/>
    <property type="project" value="UniProtKB-UniRule"/>
</dbReference>
<dbReference type="GO" id="GO:0020037">
    <property type="term" value="F:heme binding"/>
    <property type="evidence" value="ECO:0007669"/>
    <property type="project" value="UniProtKB-UniRule"/>
</dbReference>
<dbReference type="GO" id="GO:0046872">
    <property type="term" value="F:metal ion binding"/>
    <property type="evidence" value="ECO:0007669"/>
    <property type="project" value="UniProtKB-KW"/>
</dbReference>
<dbReference type="GO" id="GO:0016679">
    <property type="term" value="F:oxidoreductase activity, acting on diphenols and related substances as donors"/>
    <property type="evidence" value="ECO:0007669"/>
    <property type="project" value="TreeGrafter"/>
</dbReference>
<dbReference type="GO" id="GO:0030091">
    <property type="term" value="P:protein repair"/>
    <property type="evidence" value="ECO:0007669"/>
    <property type="project" value="UniProtKB-UniRule"/>
</dbReference>
<dbReference type="HAMAP" id="MF_01207">
    <property type="entry name" value="MsrQ"/>
    <property type="match status" value="1"/>
</dbReference>
<dbReference type="InterPro" id="IPR013130">
    <property type="entry name" value="Fe3_Rdtase_TM_dom"/>
</dbReference>
<dbReference type="InterPro" id="IPR022837">
    <property type="entry name" value="MsrQ-like"/>
</dbReference>
<dbReference type="NCBIfam" id="NF003830">
    <property type="entry name" value="PRK05419.1-1"/>
    <property type="match status" value="1"/>
</dbReference>
<dbReference type="NCBIfam" id="NF003831">
    <property type="entry name" value="PRK05419.1-2"/>
    <property type="match status" value="1"/>
</dbReference>
<dbReference type="NCBIfam" id="NF003832">
    <property type="entry name" value="PRK05419.1-4"/>
    <property type="match status" value="1"/>
</dbReference>
<dbReference type="PANTHER" id="PTHR36964">
    <property type="entry name" value="PROTEIN-METHIONINE-SULFOXIDE REDUCTASE HEME-BINDING SUBUNIT MSRQ"/>
    <property type="match status" value="1"/>
</dbReference>
<dbReference type="PANTHER" id="PTHR36964:SF1">
    <property type="entry name" value="PROTEIN-METHIONINE-SULFOXIDE REDUCTASE HEME-BINDING SUBUNIT MSRQ"/>
    <property type="match status" value="1"/>
</dbReference>
<dbReference type="Pfam" id="PF01794">
    <property type="entry name" value="Ferric_reduct"/>
    <property type="match status" value="1"/>
</dbReference>
<feature type="chain" id="PRO_1000066171" description="Protein-methionine-sulfoxide reductase heme-binding subunit MsrQ">
    <location>
        <begin position="1"/>
        <end position="211"/>
    </location>
</feature>
<feature type="transmembrane region" description="Helical" evidence="1">
    <location>
        <begin position="10"/>
        <end position="30"/>
    </location>
</feature>
<feature type="transmembrane region" description="Helical" evidence="1">
    <location>
        <begin position="82"/>
        <end position="102"/>
    </location>
</feature>
<feature type="transmembrane region" description="Helical" evidence="1">
    <location>
        <begin position="116"/>
        <end position="136"/>
    </location>
</feature>
<feature type="transmembrane region" description="Helical" evidence="1">
    <location>
        <begin position="153"/>
        <end position="173"/>
    </location>
</feature>
<feature type="transmembrane region" description="Helical" evidence="1">
    <location>
        <begin position="178"/>
        <end position="198"/>
    </location>
</feature>